<organism>
    <name type="scientific">Burkholderia vietnamiensis (strain G4 / LMG 22486)</name>
    <name type="common">Burkholderia cepacia (strain R1808)</name>
    <dbReference type="NCBI Taxonomy" id="269482"/>
    <lineage>
        <taxon>Bacteria</taxon>
        <taxon>Pseudomonadati</taxon>
        <taxon>Pseudomonadota</taxon>
        <taxon>Betaproteobacteria</taxon>
        <taxon>Burkholderiales</taxon>
        <taxon>Burkholderiaceae</taxon>
        <taxon>Burkholderia</taxon>
        <taxon>Burkholderia cepacia complex</taxon>
    </lineage>
</organism>
<gene>
    <name evidence="1" type="primary">coq7</name>
    <name type="ordered locus">Bcep1808_0525</name>
</gene>
<name>COQ7_BURVG</name>
<accession>A4JB84</accession>
<reference key="1">
    <citation type="submission" date="2007-03" db="EMBL/GenBank/DDBJ databases">
        <title>Complete sequence of chromosome 1 of Burkholderia vietnamiensis G4.</title>
        <authorList>
            <consortium name="US DOE Joint Genome Institute"/>
            <person name="Copeland A."/>
            <person name="Lucas S."/>
            <person name="Lapidus A."/>
            <person name="Barry K."/>
            <person name="Detter J.C."/>
            <person name="Glavina del Rio T."/>
            <person name="Hammon N."/>
            <person name="Israni S."/>
            <person name="Dalin E."/>
            <person name="Tice H."/>
            <person name="Pitluck S."/>
            <person name="Chain P."/>
            <person name="Malfatti S."/>
            <person name="Shin M."/>
            <person name="Vergez L."/>
            <person name="Schmutz J."/>
            <person name="Larimer F."/>
            <person name="Land M."/>
            <person name="Hauser L."/>
            <person name="Kyrpides N."/>
            <person name="Tiedje J."/>
            <person name="Richardson P."/>
        </authorList>
    </citation>
    <scope>NUCLEOTIDE SEQUENCE [LARGE SCALE GENOMIC DNA]</scope>
    <source>
        <strain>G4 / LMG 22486</strain>
    </source>
</reference>
<feature type="chain" id="PRO_0000338676" description="3-demethoxyubiquinol 3-hydroxylase">
    <location>
        <begin position="1"/>
        <end position="208"/>
    </location>
</feature>
<feature type="binding site" evidence="1">
    <location>
        <position position="57"/>
    </location>
    <ligand>
        <name>Fe cation</name>
        <dbReference type="ChEBI" id="CHEBI:24875"/>
        <label>1</label>
    </ligand>
</feature>
<feature type="binding site" evidence="1">
    <location>
        <position position="87"/>
    </location>
    <ligand>
        <name>Fe cation</name>
        <dbReference type="ChEBI" id="CHEBI:24875"/>
        <label>1</label>
    </ligand>
</feature>
<feature type="binding site" evidence="1">
    <location>
        <position position="87"/>
    </location>
    <ligand>
        <name>Fe cation</name>
        <dbReference type="ChEBI" id="CHEBI:24875"/>
        <label>2</label>
    </ligand>
</feature>
<feature type="binding site" evidence="1">
    <location>
        <position position="90"/>
    </location>
    <ligand>
        <name>Fe cation</name>
        <dbReference type="ChEBI" id="CHEBI:24875"/>
        <label>1</label>
    </ligand>
</feature>
<feature type="binding site" evidence="1">
    <location>
        <position position="139"/>
    </location>
    <ligand>
        <name>Fe cation</name>
        <dbReference type="ChEBI" id="CHEBI:24875"/>
        <label>2</label>
    </ligand>
</feature>
<feature type="binding site" evidence="1">
    <location>
        <position position="171"/>
    </location>
    <ligand>
        <name>Fe cation</name>
        <dbReference type="ChEBI" id="CHEBI:24875"/>
        <label>1</label>
    </ligand>
</feature>
<feature type="binding site" evidence="1">
    <location>
        <position position="171"/>
    </location>
    <ligand>
        <name>Fe cation</name>
        <dbReference type="ChEBI" id="CHEBI:24875"/>
        <label>2</label>
    </ligand>
</feature>
<feature type="binding site" evidence="1">
    <location>
        <position position="174"/>
    </location>
    <ligand>
        <name>Fe cation</name>
        <dbReference type="ChEBI" id="CHEBI:24875"/>
        <label>2</label>
    </ligand>
</feature>
<protein>
    <recommendedName>
        <fullName evidence="1">3-demethoxyubiquinol 3-hydroxylase</fullName>
        <shortName evidence="1">DMQ hydroxylase</shortName>
        <ecNumber evidence="1">1.14.99.60</ecNumber>
    </recommendedName>
    <alternativeName>
        <fullName evidence="1">2-nonaprenyl-3-methyl-6-methoxy-1,4-benzoquinol hydroxylase</fullName>
    </alternativeName>
</protein>
<dbReference type="EC" id="1.14.99.60" evidence="1"/>
<dbReference type="EMBL" id="CP000614">
    <property type="protein sequence ID" value="ABO53537.1"/>
    <property type="molecule type" value="Genomic_DNA"/>
</dbReference>
<dbReference type="SMR" id="A4JB84"/>
<dbReference type="KEGG" id="bvi:Bcep1808_0525"/>
<dbReference type="eggNOG" id="COG2941">
    <property type="taxonomic scope" value="Bacteria"/>
</dbReference>
<dbReference type="HOGENOM" id="CLU_088601_0_0_4"/>
<dbReference type="UniPathway" id="UPA00232"/>
<dbReference type="Proteomes" id="UP000002287">
    <property type="component" value="Chromosome 1"/>
</dbReference>
<dbReference type="GO" id="GO:0005886">
    <property type="term" value="C:plasma membrane"/>
    <property type="evidence" value="ECO:0007669"/>
    <property type="project" value="UniProtKB-SubCell"/>
</dbReference>
<dbReference type="GO" id="GO:0008682">
    <property type="term" value="F:3-demethoxyubiquinol 3-hydroxylase activity"/>
    <property type="evidence" value="ECO:0007669"/>
    <property type="project" value="UniProtKB-EC"/>
</dbReference>
<dbReference type="GO" id="GO:0046872">
    <property type="term" value="F:metal ion binding"/>
    <property type="evidence" value="ECO:0007669"/>
    <property type="project" value="UniProtKB-KW"/>
</dbReference>
<dbReference type="GO" id="GO:0006744">
    <property type="term" value="P:ubiquinone biosynthetic process"/>
    <property type="evidence" value="ECO:0007669"/>
    <property type="project" value="UniProtKB-UniRule"/>
</dbReference>
<dbReference type="CDD" id="cd01042">
    <property type="entry name" value="DMQH"/>
    <property type="match status" value="1"/>
</dbReference>
<dbReference type="Gene3D" id="1.20.1260.10">
    <property type="match status" value="1"/>
</dbReference>
<dbReference type="HAMAP" id="MF_01658">
    <property type="entry name" value="COQ7"/>
    <property type="match status" value="1"/>
</dbReference>
<dbReference type="InterPro" id="IPR047809">
    <property type="entry name" value="COQ7_proteobact"/>
</dbReference>
<dbReference type="InterPro" id="IPR012347">
    <property type="entry name" value="Ferritin-like"/>
</dbReference>
<dbReference type="InterPro" id="IPR009078">
    <property type="entry name" value="Ferritin-like_SF"/>
</dbReference>
<dbReference type="InterPro" id="IPR011566">
    <property type="entry name" value="Ubq_synth_Coq7"/>
</dbReference>
<dbReference type="NCBIfam" id="NF033656">
    <property type="entry name" value="DMQ_monoox_COQ7"/>
    <property type="match status" value="1"/>
</dbReference>
<dbReference type="PANTHER" id="PTHR11237:SF4">
    <property type="entry name" value="5-DEMETHOXYUBIQUINONE HYDROXYLASE, MITOCHONDRIAL"/>
    <property type="match status" value="1"/>
</dbReference>
<dbReference type="PANTHER" id="PTHR11237">
    <property type="entry name" value="COENZYME Q10 BIOSYNTHESIS PROTEIN 7"/>
    <property type="match status" value="1"/>
</dbReference>
<dbReference type="Pfam" id="PF03232">
    <property type="entry name" value="COQ7"/>
    <property type="match status" value="1"/>
</dbReference>
<dbReference type="SUPFAM" id="SSF47240">
    <property type="entry name" value="Ferritin-like"/>
    <property type="match status" value="1"/>
</dbReference>
<comment type="function">
    <text evidence="1">Catalyzes the hydroxylation of 2-nonaprenyl-3-methyl-6-methoxy-1,4-benzoquinol during ubiquinone biosynthesis.</text>
</comment>
<comment type="catalytic activity">
    <reaction evidence="1">
        <text>a 5-methoxy-2-methyl-3-(all-trans-polyprenyl)benzene-1,4-diol + AH2 + O2 = a 3-demethylubiquinol + A + H2O</text>
        <dbReference type="Rhea" id="RHEA:50908"/>
        <dbReference type="Rhea" id="RHEA-COMP:10859"/>
        <dbReference type="Rhea" id="RHEA-COMP:10914"/>
        <dbReference type="ChEBI" id="CHEBI:13193"/>
        <dbReference type="ChEBI" id="CHEBI:15377"/>
        <dbReference type="ChEBI" id="CHEBI:15379"/>
        <dbReference type="ChEBI" id="CHEBI:17499"/>
        <dbReference type="ChEBI" id="CHEBI:84167"/>
        <dbReference type="ChEBI" id="CHEBI:84422"/>
        <dbReference type="EC" id="1.14.99.60"/>
    </reaction>
</comment>
<comment type="cofactor">
    <cofactor evidence="1">
        <name>Fe cation</name>
        <dbReference type="ChEBI" id="CHEBI:24875"/>
    </cofactor>
    <text evidence="1">Binds 2 iron ions per subunit.</text>
</comment>
<comment type="pathway">
    <text evidence="1">Cofactor biosynthesis; ubiquinone biosynthesis.</text>
</comment>
<comment type="subcellular location">
    <subcellularLocation>
        <location evidence="1">Cell membrane</location>
        <topology evidence="1">Peripheral membrane protein</topology>
    </subcellularLocation>
</comment>
<comment type="similarity">
    <text evidence="1">Belongs to the COQ7 family.</text>
</comment>
<proteinExistence type="inferred from homology"/>
<evidence type="ECO:0000255" key="1">
    <source>
        <dbReference type="HAMAP-Rule" id="MF_01658"/>
    </source>
</evidence>
<keyword id="KW-1003">Cell membrane</keyword>
<keyword id="KW-0408">Iron</keyword>
<keyword id="KW-0472">Membrane</keyword>
<keyword id="KW-0479">Metal-binding</keyword>
<keyword id="KW-0503">Monooxygenase</keyword>
<keyword id="KW-0560">Oxidoreductase</keyword>
<keyword id="KW-0831">Ubiquinone biosynthesis</keyword>
<sequence length="208" mass="22499">MVLDELISEFDRGLRSLTGISRMSRPVPVPAQPPAAELTPAERTHAAGLMRVNHVGEVCAQALYQAQKFTARTASAKATFEEAAREEEDHLAWTAHRLKELDSRPSLLNPLWYAGALAIGVAAGTLGDKVSLGFMAETERQVENHLEGHLSELPAADTASRAIVDQMRIDEVKHGKAATDAGGVELPLPARMLMRAASKVMTSTAYYL</sequence>